<accession>C6C030</accession>
<organism>
    <name type="scientific">Maridesulfovibrio salexigens (strain ATCC 14822 / DSM 2638 / NCIMB 8403 / VKM B-1763)</name>
    <name type="common">Desulfovibrio salexigens</name>
    <dbReference type="NCBI Taxonomy" id="526222"/>
    <lineage>
        <taxon>Bacteria</taxon>
        <taxon>Pseudomonadati</taxon>
        <taxon>Thermodesulfobacteriota</taxon>
        <taxon>Desulfovibrionia</taxon>
        <taxon>Desulfovibrionales</taxon>
        <taxon>Desulfovibrionaceae</taxon>
        <taxon>Maridesulfovibrio</taxon>
    </lineage>
</organism>
<gene>
    <name evidence="1" type="primary">hcp</name>
    <name type="ordered locus">Desal_2849</name>
</gene>
<feature type="chain" id="PRO_1000202434" description="Hydroxylamine reductase">
    <location>
        <begin position="1"/>
        <end position="533"/>
    </location>
</feature>
<feature type="binding site" evidence="1">
    <location>
        <position position="3"/>
    </location>
    <ligand>
        <name>[4Fe-4S] cluster</name>
        <dbReference type="ChEBI" id="CHEBI:49883"/>
    </ligand>
</feature>
<feature type="binding site" evidence="1">
    <location>
        <position position="6"/>
    </location>
    <ligand>
        <name>[4Fe-4S] cluster</name>
        <dbReference type="ChEBI" id="CHEBI:49883"/>
    </ligand>
</feature>
<feature type="binding site" evidence="1">
    <location>
        <position position="15"/>
    </location>
    <ligand>
        <name>[4Fe-4S] cluster</name>
        <dbReference type="ChEBI" id="CHEBI:49883"/>
    </ligand>
</feature>
<feature type="binding site" evidence="1">
    <location>
        <position position="21"/>
    </location>
    <ligand>
        <name>[4Fe-4S] cluster</name>
        <dbReference type="ChEBI" id="CHEBI:49883"/>
    </ligand>
</feature>
<feature type="binding site" evidence="1">
    <location>
        <position position="234"/>
    </location>
    <ligand>
        <name>hybrid [4Fe-2O-2S] cluster</name>
        <dbReference type="ChEBI" id="CHEBI:60519"/>
    </ligand>
</feature>
<feature type="binding site" evidence="1">
    <location>
        <position position="258"/>
    </location>
    <ligand>
        <name>hybrid [4Fe-2O-2S] cluster</name>
        <dbReference type="ChEBI" id="CHEBI:60519"/>
    </ligand>
</feature>
<feature type="binding site" evidence="1">
    <location>
        <position position="302"/>
    </location>
    <ligand>
        <name>hybrid [4Fe-2O-2S] cluster</name>
        <dbReference type="ChEBI" id="CHEBI:60519"/>
    </ligand>
</feature>
<feature type="binding site" description="via persulfide group" evidence="1">
    <location>
        <position position="389"/>
    </location>
    <ligand>
        <name>hybrid [4Fe-2O-2S] cluster</name>
        <dbReference type="ChEBI" id="CHEBI:60519"/>
    </ligand>
</feature>
<feature type="binding site" evidence="1">
    <location>
        <position position="417"/>
    </location>
    <ligand>
        <name>hybrid [4Fe-2O-2S] cluster</name>
        <dbReference type="ChEBI" id="CHEBI:60519"/>
    </ligand>
</feature>
<feature type="binding site" evidence="1">
    <location>
        <position position="442"/>
    </location>
    <ligand>
        <name>hybrid [4Fe-2O-2S] cluster</name>
        <dbReference type="ChEBI" id="CHEBI:60519"/>
    </ligand>
</feature>
<feature type="binding site" evidence="1">
    <location>
        <position position="476"/>
    </location>
    <ligand>
        <name>hybrid [4Fe-2O-2S] cluster</name>
        <dbReference type="ChEBI" id="CHEBI:60519"/>
    </ligand>
</feature>
<feature type="binding site" evidence="1">
    <location>
        <position position="478"/>
    </location>
    <ligand>
        <name>hybrid [4Fe-2O-2S] cluster</name>
        <dbReference type="ChEBI" id="CHEBI:60519"/>
    </ligand>
</feature>
<feature type="modified residue" description="Cysteine persulfide" evidence="1">
    <location>
        <position position="389"/>
    </location>
</feature>
<dbReference type="EC" id="1.7.99.1" evidence="1"/>
<dbReference type="EMBL" id="CP001649">
    <property type="protein sequence ID" value="ACS80901.1"/>
    <property type="molecule type" value="Genomic_DNA"/>
</dbReference>
<dbReference type="RefSeq" id="WP_015852717.1">
    <property type="nucleotide sequence ID" value="NC_012881.1"/>
</dbReference>
<dbReference type="SMR" id="C6C030"/>
<dbReference type="STRING" id="526222.Desal_2849"/>
<dbReference type="KEGG" id="dsa:Desal_2849"/>
<dbReference type="eggNOG" id="COG1151">
    <property type="taxonomic scope" value="Bacteria"/>
</dbReference>
<dbReference type="HOGENOM" id="CLU_038344_2_0_7"/>
<dbReference type="OrthoDB" id="9761526at2"/>
<dbReference type="Proteomes" id="UP000002601">
    <property type="component" value="Chromosome"/>
</dbReference>
<dbReference type="GO" id="GO:0005737">
    <property type="term" value="C:cytoplasm"/>
    <property type="evidence" value="ECO:0007669"/>
    <property type="project" value="UniProtKB-SubCell"/>
</dbReference>
<dbReference type="GO" id="GO:0051539">
    <property type="term" value="F:4 iron, 4 sulfur cluster binding"/>
    <property type="evidence" value="ECO:0007669"/>
    <property type="project" value="UniProtKB-KW"/>
</dbReference>
<dbReference type="GO" id="GO:0050418">
    <property type="term" value="F:hydroxylamine reductase activity"/>
    <property type="evidence" value="ECO:0007669"/>
    <property type="project" value="UniProtKB-UniRule"/>
</dbReference>
<dbReference type="GO" id="GO:0046872">
    <property type="term" value="F:metal ion binding"/>
    <property type="evidence" value="ECO:0007669"/>
    <property type="project" value="UniProtKB-KW"/>
</dbReference>
<dbReference type="GO" id="GO:0004601">
    <property type="term" value="F:peroxidase activity"/>
    <property type="evidence" value="ECO:0007669"/>
    <property type="project" value="TreeGrafter"/>
</dbReference>
<dbReference type="GO" id="GO:0042542">
    <property type="term" value="P:response to hydrogen peroxide"/>
    <property type="evidence" value="ECO:0007669"/>
    <property type="project" value="TreeGrafter"/>
</dbReference>
<dbReference type="CDD" id="cd01914">
    <property type="entry name" value="HCP"/>
    <property type="match status" value="1"/>
</dbReference>
<dbReference type="FunFam" id="1.20.1270.20:FF:000001">
    <property type="entry name" value="Hydroxylamine reductase"/>
    <property type="match status" value="1"/>
</dbReference>
<dbReference type="FunFam" id="3.40.50.2030:FF:000001">
    <property type="entry name" value="Hydroxylamine reductase"/>
    <property type="match status" value="1"/>
</dbReference>
<dbReference type="FunFam" id="3.40.50.2030:FF:000002">
    <property type="entry name" value="Hydroxylamine reductase"/>
    <property type="match status" value="1"/>
</dbReference>
<dbReference type="Gene3D" id="1.20.1270.20">
    <property type="match status" value="2"/>
</dbReference>
<dbReference type="Gene3D" id="3.40.50.2030">
    <property type="match status" value="2"/>
</dbReference>
<dbReference type="HAMAP" id="MF_00069">
    <property type="entry name" value="Hydroxylam_reduct"/>
    <property type="match status" value="1"/>
</dbReference>
<dbReference type="InterPro" id="IPR004137">
    <property type="entry name" value="HCP/CODH"/>
</dbReference>
<dbReference type="InterPro" id="IPR010048">
    <property type="entry name" value="Hydroxylam_reduct"/>
</dbReference>
<dbReference type="InterPro" id="IPR016099">
    <property type="entry name" value="Prismane-like_a/b-sand"/>
</dbReference>
<dbReference type="InterPro" id="IPR011254">
    <property type="entry name" value="Prismane-like_sf"/>
</dbReference>
<dbReference type="InterPro" id="IPR016100">
    <property type="entry name" value="Prismane_a-bundle"/>
</dbReference>
<dbReference type="NCBIfam" id="TIGR01703">
    <property type="entry name" value="hybrid_clust"/>
    <property type="match status" value="1"/>
</dbReference>
<dbReference type="NCBIfam" id="NF003658">
    <property type="entry name" value="PRK05290.1"/>
    <property type="match status" value="1"/>
</dbReference>
<dbReference type="PANTHER" id="PTHR30109">
    <property type="entry name" value="HYDROXYLAMINE REDUCTASE"/>
    <property type="match status" value="1"/>
</dbReference>
<dbReference type="PANTHER" id="PTHR30109:SF0">
    <property type="entry name" value="HYDROXYLAMINE REDUCTASE"/>
    <property type="match status" value="1"/>
</dbReference>
<dbReference type="Pfam" id="PF03063">
    <property type="entry name" value="Prismane"/>
    <property type="match status" value="1"/>
</dbReference>
<dbReference type="PIRSF" id="PIRSF000076">
    <property type="entry name" value="HCP"/>
    <property type="match status" value="1"/>
</dbReference>
<dbReference type="SUPFAM" id="SSF56821">
    <property type="entry name" value="Prismane protein-like"/>
    <property type="match status" value="1"/>
</dbReference>
<name>HCP_MARSD</name>
<proteinExistence type="inferred from homology"/>
<keyword id="KW-0004">4Fe-4S</keyword>
<keyword id="KW-0963">Cytoplasm</keyword>
<keyword id="KW-0408">Iron</keyword>
<keyword id="KW-0411">Iron-sulfur</keyword>
<keyword id="KW-0479">Metal-binding</keyword>
<keyword id="KW-0560">Oxidoreductase</keyword>
<keyword id="KW-1185">Reference proteome</keyword>
<comment type="function">
    <text evidence="1">Catalyzes the reduction of hydroxylamine to form NH(3) and H(2)O.</text>
</comment>
<comment type="catalytic activity">
    <reaction evidence="1">
        <text>A + NH4(+) + H2O = hydroxylamine + AH2 + H(+)</text>
        <dbReference type="Rhea" id="RHEA:22052"/>
        <dbReference type="ChEBI" id="CHEBI:13193"/>
        <dbReference type="ChEBI" id="CHEBI:15377"/>
        <dbReference type="ChEBI" id="CHEBI:15378"/>
        <dbReference type="ChEBI" id="CHEBI:15429"/>
        <dbReference type="ChEBI" id="CHEBI:17499"/>
        <dbReference type="ChEBI" id="CHEBI:28938"/>
        <dbReference type="EC" id="1.7.99.1"/>
    </reaction>
</comment>
<comment type="cofactor">
    <cofactor evidence="1">
        <name>[4Fe-4S] cluster</name>
        <dbReference type="ChEBI" id="CHEBI:49883"/>
    </cofactor>
    <text evidence="1">Binds 1 [4Fe-4S] cluster.</text>
</comment>
<comment type="cofactor">
    <cofactor evidence="1">
        <name>hybrid [4Fe-2O-2S] cluster</name>
        <dbReference type="ChEBI" id="CHEBI:60519"/>
    </cofactor>
    <text evidence="1">Binds 1 hybrid [4Fe-2O-2S] cluster.</text>
</comment>
<comment type="subcellular location">
    <subcellularLocation>
        <location evidence="1">Cytoplasm</location>
    </subcellularLocation>
</comment>
<comment type="similarity">
    <text evidence="1">Belongs to the HCP family.</text>
</comment>
<reference key="1">
    <citation type="submission" date="2009-06" db="EMBL/GenBank/DDBJ databases">
        <title>Complete sequence of Desulfovibrio salexigens DSM 2638.</title>
        <authorList>
            <consortium name="US DOE Joint Genome Institute"/>
            <person name="Lucas S."/>
            <person name="Copeland A."/>
            <person name="Lapidus A."/>
            <person name="Glavina del Rio T."/>
            <person name="Tice H."/>
            <person name="Bruce D."/>
            <person name="Goodwin L."/>
            <person name="Pitluck S."/>
            <person name="Munk A.C."/>
            <person name="Brettin T."/>
            <person name="Detter J.C."/>
            <person name="Han C."/>
            <person name="Tapia R."/>
            <person name="Larimer F."/>
            <person name="Land M."/>
            <person name="Hauser L."/>
            <person name="Kyrpides N."/>
            <person name="Anderson I."/>
            <person name="Wall J.D."/>
            <person name="Arkin A.P."/>
            <person name="Dehal P."/>
            <person name="Chivian D."/>
            <person name="Giles B."/>
            <person name="Hazen T.C."/>
        </authorList>
    </citation>
    <scope>NUCLEOTIDE SEQUENCE [LARGE SCALE GENOMIC DNA]</scope>
    <source>
        <strain>ATCC 14822 / DSM 2638 / NCIMB 8403 / VKM B-1763</strain>
    </source>
</reference>
<protein>
    <recommendedName>
        <fullName evidence="1">Hydroxylamine reductase</fullName>
        <ecNumber evidence="1">1.7.99.1</ecNumber>
    </recommendedName>
    <alternativeName>
        <fullName evidence="1">Hybrid-cluster protein</fullName>
        <shortName evidence="1">HCP</shortName>
    </alternativeName>
    <alternativeName>
        <fullName evidence="1">Prismane protein</fullName>
    </alternativeName>
</protein>
<evidence type="ECO:0000255" key="1">
    <source>
        <dbReference type="HAMAP-Rule" id="MF_00069"/>
    </source>
</evidence>
<sequence length="533" mass="57352">MFCNQCEQTAKGQGCTVKGVCGKTDEVSAIQDLLVQVLVELGTVATAARKEGIAVSNEVNRLTAEGVFSTLTNVNFDDERFVPVIKNVAAARDELAAKVSADCGKLTKVAGTAAELSKQGEAFPVTSFDENEDLRSLKQILVYGLKGVAAYTDHAAILGQEDDELYAQIHEALSVVPQQLGMEELVGWAMKCGEMNLKAMELLDAGNTGAYGHPVPTEVPLGAKAGKAILVSGHDLKDLRQLLEQTEGTGINIYTHGEMLPCHGYPELKKFDHFYGHYGTAWQNQAKEFAQFPGAILMTTNCIQKPVESYKGNIYTTGLVGWPGVTHVTNGDFAEVIAKAQELPGFEADTDNGKVLCGFARNTVLGVADKVIEGVKAGAIKHFFLVGGCDGAKPGRNYYTDFVEQAPQDTVILTLACGKFRFFDKQLGDIGGIPRLLDIGQCNDAYSAIQIAVALANAFECGVNDLPLSMVLSWYEQKAVSILLTLLHLGIKDIRLGPSLPAFVTPNVLNFLVENFNIMPISTPEEDLKAILG</sequence>